<comment type="function">
    <text evidence="5">May be involved in the regulation of cilia function.</text>
</comment>
<comment type="subunit">
    <text evidence="1">Part of the multisubunit axonemal dynein complex formed at least of two heavy chains and a number of intermediate and light chains.</text>
</comment>
<comment type="subcellular location">
    <subcellularLocation>
        <location evidence="2">Cytoplasm</location>
    </subcellularLocation>
</comment>
<comment type="developmental stage">
    <text evidence="5">Expressed maternally and throughout early developmental stages.</text>
</comment>
<comment type="disruption phenotype">
    <text evidence="5">Morpholino knockdown of the protein results in a ciliopathy like body curvature. Morphant embryos show a reduction and dis-organization of floor plate motile cilia and a significant reduction in primary cilia of the dorsal neural tube. No severe brain abnormalities is observed.</text>
</comment>
<sequence length="968" mass="110941">MKDTSSKRPKSKEANKKKTKDKSNADNLPKPEEAAASEPGHPEYIFPLVLTSVSQELFGCRADEDVTAENPHKLLKKQDIIQDLRHRAAVCDFSPVKQAVLDYPEDELLLVFDRDFIYGQSFYLVLTVQAKESILKPPAEGADEQMEDEEQQEEEEEMMTKTPEPQPWVSLGSERLVYTPSAVLSSVICVRQLRYSVCPLGRRSGTRVRFSDRNALDWKEELVECSSYEDKSFSITRMERDSSTQTCRDNTHTCTQTLWKKPKNMWSQYEPREFSSEEKQHQLQSENLKNFITSVARRFEIYLQQNLIADVFCDDWTALCEDDASLMGKTETQLKEYQSFMDLHFSKEKTISHVQWHPSISGVIVVSMMERLSLEERIDSSTKLLLNPSHILFWSFSDPINPQLQLECPDDVLCFQFSPSDHNIIAGGCMNGQVVLWDISAHVDRLQDTRSGGKNILNKLGKSDATPVVRYCAVSGIENGHKAPITDIQWLPETFEVNKLGTPVENQSRTSVQLVTCAPDCCVLFWDLRAPRVMVHSLTDIKQKQEEKPLENPHGVPNTFTHLNLTWKPFIRVSLPKISSSGEYSPLRFSMRENTVDYNTGDKSVSGADSRVFAQLRMQSAKQQKPLQNISTKLYIATEDGELVYTDWKVEKDNDSGRMLSAKPLDVFLLQDTLLHTVSRSPFFRDIILTVGRFSFSIWREGLTCGPLLMSVYSKSMFSAGHWSRSRPAVLFMGREDGDVEVWDLLQNSRQPSHTQNISTAAISCIRTQTSSGNTHPYTETLHTHTHTQPPSAAYAHRPAPVTHTHTHKHCTHTHTHTHTHTHTHSRHQLHTHTDQLRVLEERVREAKQNLLAVSDRLGTLHILQIPGSLRRSSSSERQNVEKYFEKEEERLQYFEKRQSDHQKKKKETEAEQQKKKTELVTPPKQEEEVNAETLKEYQQFLTLEKLILKDMNIQNETQQTCNTINTP</sequence>
<dbReference type="EMBL" id="CABZ01069335">
    <property type="status" value="NOT_ANNOTATED_CDS"/>
    <property type="molecule type" value="Genomic_DNA"/>
</dbReference>
<dbReference type="EMBL" id="CABZ01069336">
    <property type="status" value="NOT_ANNOTATED_CDS"/>
    <property type="molecule type" value="Genomic_DNA"/>
</dbReference>
<dbReference type="EMBL" id="CABZ01069337">
    <property type="status" value="NOT_ANNOTATED_CDS"/>
    <property type="molecule type" value="Genomic_DNA"/>
</dbReference>
<dbReference type="EMBL" id="CABZ01069338">
    <property type="status" value="NOT_ANNOTATED_CDS"/>
    <property type="molecule type" value="Genomic_DNA"/>
</dbReference>
<dbReference type="EMBL" id="LO017850">
    <property type="status" value="NOT_ANNOTATED_CDS"/>
    <property type="molecule type" value="Genomic_DNA"/>
</dbReference>
<dbReference type="SMR" id="A0A0G2KIZ8"/>
<dbReference type="FunCoup" id="A0A0G2KIZ8">
    <property type="interactions" value="188"/>
</dbReference>
<dbReference type="STRING" id="7955.ENSDARP00000132295"/>
<dbReference type="eggNOG" id="KOG1587">
    <property type="taxonomic scope" value="Eukaryota"/>
</dbReference>
<dbReference type="InParanoid" id="A0A0G2KIZ8"/>
<dbReference type="OrthoDB" id="6619788at2759"/>
<dbReference type="Proteomes" id="UP000000437">
    <property type="component" value="Unplaced"/>
</dbReference>
<dbReference type="GO" id="GO:0005737">
    <property type="term" value="C:cytoplasm"/>
    <property type="evidence" value="ECO:0000250"/>
    <property type="project" value="UniProtKB"/>
</dbReference>
<dbReference type="GO" id="GO:0003341">
    <property type="term" value="P:cilium movement"/>
    <property type="evidence" value="ECO:0000315"/>
    <property type="project" value="UniProtKB"/>
</dbReference>
<dbReference type="Gene3D" id="2.130.10.10">
    <property type="entry name" value="YVTN repeat-like/Quinoprotein amine dehydrogenase"/>
    <property type="match status" value="1"/>
</dbReference>
<dbReference type="InterPro" id="IPR050687">
    <property type="entry name" value="Dynein_IC"/>
</dbReference>
<dbReference type="InterPro" id="IPR015943">
    <property type="entry name" value="WD40/YVTN_repeat-like_dom_sf"/>
</dbReference>
<dbReference type="InterPro" id="IPR036322">
    <property type="entry name" value="WD40_repeat_dom_sf"/>
</dbReference>
<dbReference type="InterPro" id="IPR001680">
    <property type="entry name" value="WD40_rpt"/>
</dbReference>
<dbReference type="PANTHER" id="PTHR12442:SF5">
    <property type="entry name" value="DYNEIN AXONEMAL INTERMEDIATE CHAIN 3"/>
    <property type="match status" value="1"/>
</dbReference>
<dbReference type="PANTHER" id="PTHR12442">
    <property type="entry name" value="DYNEIN INTERMEDIATE CHAIN"/>
    <property type="match status" value="1"/>
</dbReference>
<dbReference type="SMART" id="SM00320">
    <property type="entry name" value="WD40"/>
    <property type="match status" value="2"/>
</dbReference>
<dbReference type="SUPFAM" id="SSF50978">
    <property type="entry name" value="WD40 repeat-like"/>
    <property type="match status" value="1"/>
</dbReference>
<dbReference type="PROSITE" id="PS00678">
    <property type="entry name" value="WD_REPEATS_1"/>
    <property type="match status" value="3"/>
</dbReference>
<gene>
    <name type="primary">dnai3</name>
    <name type="synonym">wdr63</name>
</gene>
<organism>
    <name type="scientific">Danio rerio</name>
    <name type="common">Zebrafish</name>
    <name type="synonym">Brachydanio rerio</name>
    <dbReference type="NCBI Taxonomy" id="7955"/>
    <lineage>
        <taxon>Eukaryota</taxon>
        <taxon>Metazoa</taxon>
        <taxon>Chordata</taxon>
        <taxon>Craniata</taxon>
        <taxon>Vertebrata</taxon>
        <taxon>Euteleostomi</taxon>
        <taxon>Actinopterygii</taxon>
        <taxon>Neopterygii</taxon>
        <taxon>Teleostei</taxon>
        <taxon>Ostariophysi</taxon>
        <taxon>Cypriniformes</taxon>
        <taxon>Danionidae</taxon>
        <taxon>Danioninae</taxon>
        <taxon>Danio</taxon>
    </lineage>
</organism>
<feature type="chain" id="PRO_0000450865" description="Dynein axonemal intermediate chain 3">
    <location>
        <begin position="1"/>
        <end position="968"/>
    </location>
</feature>
<feature type="repeat" description="WD 1" evidence="3">
    <location>
        <begin position="407"/>
        <end position="447"/>
    </location>
</feature>
<feature type="repeat" description="WD 2" evidence="3">
    <location>
        <begin position="480"/>
        <end position="536"/>
    </location>
</feature>
<feature type="repeat" description="WD 3" evidence="3">
    <location>
        <begin position="712"/>
        <end position="753"/>
    </location>
</feature>
<feature type="region of interest" description="Disordered" evidence="4">
    <location>
        <begin position="1"/>
        <end position="39"/>
    </location>
</feature>
<feature type="region of interest" description="Disordered" evidence="4">
    <location>
        <begin position="136"/>
        <end position="166"/>
    </location>
</feature>
<feature type="region of interest" description="Disordered" evidence="4">
    <location>
        <begin position="897"/>
        <end position="930"/>
    </location>
</feature>
<feature type="coiled-coil region" evidence="3">
    <location>
        <begin position="830"/>
        <end position="857"/>
    </location>
</feature>
<feature type="compositionally biased region" description="Basic and acidic residues" evidence="4">
    <location>
        <begin position="1"/>
        <end position="33"/>
    </location>
</feature>
<feature type="compositionally biased region" description="Acidic residues" evidence="4">
    <location>
        <begin position="141"/>
        <end position="157"/>
    </location>
</feature>
<feature type="compositionally biased region" description="Basic and acidic residues" evidence="4">
    <location>
        <begin position="897"/>
        <end position="919"/>
    </location>
</feature>
<accession>A0A0G2KIZ8</accession>
<proteinExistence type="evidence at transcript level"/>
<evidence type="ECO:0000250" key="1">
    <source>
        <dbReference type="UniProtKB" id="B2RY71"/>
    </source>
</evidence>
<evidence type="ECO:0000250" key="2">
    <source>
        <dbReference type="UniProtKB" id="Q8IWG1"/>
    </source>
</evidence>
<evidence type="ECO:0000255" key="3"/>
<evidence type="ECO:0000256" key="4">
    <source>
        <dbReference type="SAM" id="MobiDB-lite"/>
    </source>
</evidence>
<evidence type="ECO:0000269" key="5">
    <source>
    </source>
</evidence>
<name>DNAI3_DANRE</name>
<keyword id="KW-0175">Coiled coil</keyword>
<keyword id="KW-0963">Cytoplasm</keyword>
<keyword id="KW-1185">Reference proteome</keyword>
<keyword id="KW-0677">Repeat</keyword>
<keyword id="KW-0853">WD repeat</keyword>
<reference key="1">
    <citation type="journal article" date="2013" name="Nature">
        <title>The zebrafish reference genome sequence and its relationship to the human genome.</title>
        <authorList>
            <person name="Howe K."/>
            <person name="Clark M.D."/>
            <person name="Torroja C.F."/>
            <person name="Torrance J."/>
            <person name="Berthelot C."/>
            <person name="Muffato M."/>
            <person name="Collins J.E."/>
            <person name="Humphray S."/>
            <person name="McLaren K."/>
            <person name="Matthews L."/>
            <person name="McLaren S."/>
            <person name="Sealy I."/>
            <person name="Caccamo M."/>
            <person name="Churcher C."/>
            <person name="Scott C."/>
            <person name="Barrett J.C."/>
            <person name="Koch R."/>
            <person name="Rauch G.J."/>
            <person name="White S."/>
            <person name="Chow W."/>
            <person name="Kilian B."/>
            <person name="Quintais L.T."/>
            <person name="Guerra-Assuncao J.A."/>
            <person name="Zhou Y."/>
            <person name="Gu Y."/>
            <person name="Yen J."/>
            <person name="Vogel J.H."/>
            <person name="Eyre T."/>
            <person name="Redmond S."/>
            <person name="Banerjee R."/>
            <person name="Chi J."/>
            <person name="Fu B."/>
            <person name="Langley E."/>
            <person name="Maguire S.F."/>
            <person name="Laird G.K."/>
            <person name="Lloyd D."/>
            <person name="Kenyon E."/>
            <person name="Donaldson S."/>
            <person name="Sehra H."/>
            <person name="Almeida-King J."/>
            <person name="Loveland J."/>
            <person name="Trevanion S."/>
            <person name="Jones M."/>
            <person name="Quail M."/>
            <person name="Willey D."/>
            <person name="Hunt A."/>
            <person name="Burton J."/>
            <person name="Sims S."/>
            <person name="McLay K."/>
            <person name="Plumb B."/>
            <person name="Davis J."/>
            <person name="Clee C."/>
            <person name="Oliver K."/>
            <person name="Clark R."/>
            <person name="Riddle C."/>
            <person name="Elliot D."/>
            <person name="Threadgold G."/>
            <person name="Harden G."/>
            <person name="Ware D."/>
            <person name="Begum S."/>
            <person name="Mortimore B."/>
            <person name="Kerry G."/>
            <person name="Heath P."/>
            <person name="Phillimore B."/>
            <person name="Tracey A."/>
            <person name="Corby N."/>
            <person name="Dunn M."/>
            <person name="Johnson C."/>
            <person name="Wood J."/>
            <person name="Clark S."/>
            <person name="Pelan S."/>
            <person name="Griffiths G."/>
            <person name="Smith M."/>
            <person name="Glithero R."/>
            <person name="Howden P."/>
            <person name="Barker N."/>
            <person name="Lloyd C."/>
            <person name="Stevens C."/>
            <person name="Harley J."/>
            <person name="Holt K."/>
            <person name="Panagiotidis G."/>
            <person name="Lovell J."/>
            <person name="Beasley H."/>
            <person name="Henderson C."/>
            <person name="Gordon D."/>
            <person name="Auger K."/>
            <person name="Wright D."/>
            <person name="Collins J."/>
            <person name="Raisen C."/>
            <person name="Dyer L."/>
            <person name="Leung K."/>
            <person name="Robertson L."/>
            <person name="Ambridge K."/>
            <person name="Leongamornlert D."/>
            <person name="McGuire S."/>
            <person name="Gilderthorp R."/>
            <person name="Griffiths C."/>
            <person name="Manthravadi D."/>
            <person name="Nichol S."/>
            <person name="Barker G."/>
            <person name="Whitehead S."/>
            <person name="Kay M."/>
            <person name="Brown J."/>
            <person name="Murnane C."/>
            <person name="Gray E."/>
            <person name="Humphries M."/>
            <person name="Sycamore N."/>
            <person name="Barker D."/>
            <person name="Saunders D."/>
            <person name="Wallis J."/>
            <person name="Babbage A."/>
            <person name="Hammond S."/>
            <person name="Mashreghi-Mohammadi M."/>
            <person name="Barr L."/>
            <person name="Martin S."/>
            <person name="Wray P."/>
            <person name="Ellington A."/>
            <person name="Matthews N."/>
            <person name="Ellwood M."/>
            <person name="Woodmansey R."/>
            <person name="Clark G."/>
            <person name="Cooper J."/>
            <person name="Tromans A."/>
            <person name="Grafham D."/>
            <person name="Skuce C."/>
            <person name="Pandian R."/>
            <person name="Andrews R."/>
            <person name="Harrison E."/>
            <person name="Kimberley A."/>
            <person name="Garnett J."/>
            <person name="Fosker N."/>
            <person name="Hall R."/>
            <person name="Garner P."/>
            <person name="Kelly D."/>
            <person name="Bird C."/>
            <person name="Palmer S."/>
            <person name="Gehring I."/>
            <person name="Berger A."/>
            <person name="Dooley C.M."/>
            <person name="Ersan-Urun Z."/>
            <person name="Eser C."/>
            <person name="Geiger H."/>
            <person name="Geisler M."/>
            <person name="Karotki L."/>
            <person name="Kirn A."/>
            <person name="Konantz J."/>
            <person name="Konantz M."/>
            <person name="Oberlander M."/>
            <person name="Rudolph-Geiger S."/>
            <person name="Teucke M."/>
            <person name="Lanz C."/>
            <person name="Raddatz G."/>
            <person name="Osoegawa K."/>
            <person name="Zhu B."/>
            <person name="Rapp A."/>
            <person name="Widaa S."/>
            <person name="Langford C."/>
            <person name="Yang F."/>
            <person name="Schuster S.C."/>
            <person name="Carter N.P."/>
            <person name="Harrow J."/>
            <person name="Ning Z."/>
            <person name="Herrero J."/>
            <person name="Searle S.M."/>
            <person name="Enright A."/>
            <person name="Geisler R."/>
            <person name="Plasterk R.H."/>
            <person name="Lee C."/>
            <person name="Westerfield M."/>
            <person name="de Jong P.J."/>
            <person name="Zon L.I."/>
            <person name="Postlethwait J.H."/>
            <person name="Nusslein-Volhard C."/>
            <person name="Hubbard T.J."/>
            <person name="Roest Crollius H."/>
            <person name="Rogers J."/>
            <person name="Stemple D.L."/>
        </authorList>
    </citation>
    <scope>NUCLEOTIDE SEQUENCE [LARGE SCALE GENOMIC DNA]</scope>
    <source>
        <strain>Tuebingen</strain>
    </source>
</reference>
<reference key="2">
    <citation type="journal article" date="2018" name="Hum. Mutat.">
        <title>Targeted copy number screening highlights an intragenic deletion of WDR63 as the likely cause of human occipital encephalocele and abnormal CNS development in zebrafish.</title>
        <authorList>
            <person name="Hofmeister W."/>
            <person name="Pettersson M."/>
            <person name="Kurtoglu D."/>
            <person name="Armenio M."/>
            <person name="Eisfeldt J."/>
            <person name="Papadogiannakis N."/>
            <person name="Gustavsson P."/>
            <person name="Lindstrand A."/>
        </authorList>
    </citation>
    <scope>DISRUPTION PHENOTYPE</scope>
    <scope>FUNCTION</scope>
    <scope>DEVELOPMENTAL STAGE</scope>
</reference>
<protein>
    <recommendedName>
        <fullName>Dynein axonemal intermediate chain 3</fullName>
    </recommendedName>
    <alternativeName>
        <fullName>WD repeat domain 63</fullName>
    </alternativeName>
</protein>